<protein>
    <recommendedName>
        <fullName>Histone H2B.1</fullName>
    </recommendedName>
</protein>
<name>H2B1_ORYSI</name>
<comment type="function">
    <text>Core component of nucleosome. Nucleosomes wrap and compact DNA into chromatin, limiting DNA accessibility to the cellular machineries which require DNA as a template. Histones thereby play a central role in transcription regulation, DNA repair, DNA replication and chromosomal stability. DNA accessibility is regulated via a complex set of post-translational modifications of histones, also called histone code, and nucleosome remodeling.</text>
</comment>
<comment type="subunit">
    <text>The nucleosome is a histone octamer containing two molecules each of H2A, H2B, H3 and H4 assembled in one H3-H4 heterotetramer and two H2A-H2B heterodimers. The octamer wraps approximately 147 bp of DNA.</text>
</comment>
<comment type="subcellular location">
    <subcellularLocation>
        <location evidence="1">Nucleus</location>
    </subcellularLocation>
    <subcellularLocation>
        <location evidence="1">Chromosome</location>
    </subcellularLocation>
</comment>
<comment type="PTM">
    <text evidence="1">Can be acetylated to form H2BK6ac and H2BK33ac.</text>
</comment>
<comment type="PTM">
    <text evidence="1">Monoubiquitinated by BRE1 to form H2BK143ub1 and deubiquitinated by UBP26. Required for heterochromatic histone H3 di- and trimethylation at H3K4me. May give a specific tag for epigenetic transcriptional activation (By similarity).</text>
</comment>
<comment type="similarity">
    <text evidence="3">Belongs to the histone H2B family.</text>
</comment>
<comment type="caution">
    <text evidence="3">To ensure consistency between histone entries, we follow the 'Brno' nomenclature for histone modifications, with positions referring to those used in the literature for the 'closest' model organism. Due to slight variations in histone sequences between organisms and to the presence of initiator methionine in UniProtKB/Swiss-Prot sequences, the actual positions of modified amino acids in the sequence generally differ. In this entry the following conventions are used: H2BK6ac = acetylated Lys-7; H2BK33ac = acetylated Lys-35; H2BK143ub1 = monoubiquitinated Lys-148.</text>
</comment>
<proteinExistence type="inferred from homology"/>
<sequence>MAPKAEKKPAEKKPAAGEEKSAEKAPAGKKPKAEKRLPASKASSKEGGAGDKKGRKKAKKSVETYKIYIFKVLKQVHPDIGISSKAMSIMNSFINDIFEKLAQEAARLARYNKKPTITSREIQTSVRLVLPGELAKHAVSEGTKAVTKFTSN</sequence>
<reference key="1">
    <citation type="journal article" date="2005" name="PLoS Biol.">
        <title>The genomes of Oryza sativa: a history of duplications.</title>
        <authorList>
            <person name="Yu J."/>
            <person name="Wang J."/>
            <person name="Lin W."/>
            <person name="Li S."/>
            <person name="Li H."/>
            <person name="Zhou J."/>
            <person name="Ni P."/>
            <person name="Dong W."/>
            <person name="Hu S."/>
            <person name="Zeng C."/>
            <person name="Zhang J."/>
            <person name="Zhang Y."/>
            <person name="Li R."/>
            <person name="Xu Z."/>
            <person name="Li S."/>
            <person name="Li X."/>
            <person name="Zheng H."/>
            <person name="Cong L."/>
            <person name="Lin L."/>
            <person name="Yin J."/>
            <person name="Geng J."/>
            <person name="Li G."/>
            <person name="Shi J."/>
            <person name="Liu J."/>
            <person name="Lv H."/>
            <person name="Li J."/>
            <person name="Wang J."/>
            <person name="Deng Y."/>
            <person name="Ran L."/>
            <person name="Shi X."/>
            <person name="Wang X."/>
            <person name="Wu Q."/>
            <person name="Li C."/>
            <person name="Ren X."/>
            <person name="Wang J."/>
            <person name="Wang X."/>
            <person name="Li D."/>
            <person name="Liu D."/>
            <person name="Zhang X."/>
            <person name="Ji Z."/>
            <person name="Zhao W."/>
            <person name="Sun Y."/>
            <person name="Zhang Z."/>
            <person name="Bao J."/>
            <person name="Han Y."/>
            <person name="Dong L."/>
            <person name="Ji J."/>
            <person name="Chen P."/>
            <person name="Wu S."/>
            <person name="Liu J."/>
            <person name="Xiao Y."/>
            <person name="Bu D."/>
            <person name="Tan J."/>
            <person name="Yang L."/>
            <person name="Ye C."/>
            <person name="Zhang J."/>
            <person name="Xu J."/>
            <person name="Zhou Y."/>
            <person name="Yu Y."/>
            <person name="Zhang B."/>
            <person name="Zhuang S."/>
            <person name="Wei H."/>
            <person name="Liu B."/>
            <person name="Lei M."/>
            <person name="Yu H."/>
            <person name="Li Y."/>
            <person name="Xu H."/>
            <person name="Wei S."/>
            <person name="He X."/>
            <person name="Fang L."/>
            <person name="Zhang Z."/>
            <person name="Zhang Y."/>
            <person name="Huang X."/>
            <person name="Su Z."/>
            <person name="Tong W."/>
            <person name="Li J."/>
            <person name="Tong Z."/>
            <person name="Li S."/>
            <person name="Ye J."/>
            <person name="Wang L."/>
            <person name="Fang L."/>
            <person name="Lei T."/>
            <person name="Chen C.-S."/>
            <person name="Chen H.-C."/>
            <person name="Xu Z."/>
            <person name="Li H."/>
            <person name="Huang H."/>
            <person name="Zhang F."/>
            <person name="Xu H."/>
            <person name="Li N."/>
            <person name="Zhao C."/>
            <person name="Li S."/>
            <person name="Dong L."/>
            <person name="Huang Y."/>
            <person name="Li L."/>
            <person name="Xi Y."/>
            <person name="Qi Q."/>
            <person name="Li W."/>
            <person name="Zhang B."/>
            <person name="Hu W."/>
            <person name="Zhang Y."/>
            <person name="Tian X."/>
            <person name="Jiao Y."/>
            <person name="Liang X."/>
            <person name="Jin J."/>
            <person name="Gao L."/>
            <person name="Zheng W."/>
            <person name="Hao B."/>
            <person name="Liu S.-M."/>
            <person name="Wang W."/>
            <person name="Yuan L."/>
            <person name="Cao M."/>
            <person name="McDermott J."/>
            <person name="Samudrala R."/>
            <person name="Wang J."/>
            <person name="Wong G.K.-S."/>
            <person name="Yang H."/>
        </authorList>
    </citation>
    <scope>NUCLEOTIDE SEQUENCE [LARGE SCALE GENOMIC DNA]</scope>
    <source>
        <strain>cv. 93-11</strain>
    </source>
</reference>
<dbReference type="EMBL" id="CM000128">
    <property type="protein sequence ID" value="EAY89476.1"/>
    <property type="molecule type" value="Genomic_DNA"/>
</dbReference>
<dbReference type="SMR" id="A2XF66"/>
<dbReference type="STRING" id="39946.A2XF66"/>
<dbReference type="EnsemblPlants" id="BGIOSGA012343-TA">
    <property type="protein sequence ID" value="BGIOSGA012343-PA"/>
    <property type="gene ID" value="BGIOSGA012343"/>
</dbReference>
<dbReference type="EnsemblPlants" id="OsGoSa_03g0012830.01">
    <property type="protein sequence ID" value="OsGoSa_03g0012830.01"/>
    <property type="gene ID" value="OsGoSa_03g0012830"/>
</dbReference>
<dbReference type="EnsemblPlants" id="OsIR64_03g0012600.01">
    <property type="protein sequence ID" value="OsIR64_03g0012600.01"/>
    <property type="gene ID" value="OsIR64_03g0012600"/>
</dbReference>
<dbReference type="EnsemblPlants" id="OsKYG_03g0012780.01">
    <property type="protein sequence ID" value="OsKYG_03g0012780.01"/>
    <property type="gene ID" value="OsKYG_03g0012780"/>
</dbReference>
<dbReference type="EnsemblPlants" id="OsLaMu_03g0012680.01">
    <property type="protein sequence ID" value="OsLaMu_03g0012680.01"/>
    <property type="gene ID" value="OsLaMu_03g0012680"/>
</dbReference>
<dbReference type="EnsemblPlants" id="OsLima_03g0012760.01">
    <property type="protein sequence ID" value="OsLima_03g0012760.01"/>
    <property type="gene ID" value="OsLima_03g0012760"/>
</dbReference>
<dbReference type="EnsemblPlants" id="OsLiXu_03g0012710.01">
    <property type="protein sequence ID" value="OsLiXu_03g0012710.01"/>
    <property type="gene ID" value="OsLiXu_03g0012710"/>
</dbReference>
<dbReference type="EnsemblPlants" id="OsMH63_03G012720_01">
    <property type="protein sequence ID" value="OsMH63_03G012720_01"/>
    <property type="gene ID" value="OsMH63_03G012720"/>
</dbReference>
<dbReference type="EnsemblPlants" id="OsPr106_03g0012700.01">
    <property type="protein sequence ID" value="OsPr106_03g0012700.01"/>
    <property type="gene ID" value="OsPr106_03g0012700"/>
</dbReference>
<dbReference type="EnsemblPlants" id="OsZS97_03G012690_01">
    <property type="protein sequence ID" value="OsZS97_03G012690_01"/>
    <property type="gene ID" value="OsZS97_03G012690"/>
</dbReference>
<dbReference type="Gramene" id="BGIOSGA012343-TA">
    <property type="protein sequence ID" value="BGIOSGA012343-PA"/>
    <property type="gene ID" value="BGIOSGA012343"/>
</dbReference>
<dbReference type="Gramene" id="OsGoSa_03g0012830.01">
    <property type="protein sequence ID" value="OsGoSa_03g0012830.01"/>
    <property type="gene ID" value="OsGoSa_03g0012830"/>
</dbReference>
<dbReference type="Gramene" id="OsIR64_03g0012600.01">
    <property type="protein sequence ID" value="OsIR64_03g0012600.01"/>
    <property type="gene ID" value="OsIR64_03g0012600"/>
</dbReference>
<dbReference type="Gramene" id="OsKYG_03g0012780.01">
    <property type="protein sequence ID" value="OsKYG_03g0012780.01"/>
    <property type="gene ID" value="OsKYG_03g0012780"/>
</dbReference>
<dbReference type="Gramene" id="OsLaMu_03g0012680.01">
    <property type="protein sequence ID" value="OsLaMu_03g0012680.01"/>
    <property type="gene ID" value="OsLaMu_03g0012680"/>
</dbReference>
<dbReference type="Gramene" id="OsLima_03g0012760.01">
    <property type="protein sequence ID" value="OsLima_03g0012760.01"/>
    <property type="gene ID" value="OsLima_03g0012760"/>
</dbReference>
<dbReference type="Gramene" id="OsLiXu_03g0012710.01">
    <property type="protein sequence ID" value="OsLiXu_03g0012710.01"/>
    <property type="gene ID" value="OsLiXu_03g0012710"/>
</dbReference>
<dbReference type="Gramene" id="OsMH63_03G012720_01">
    <property type="protein sequence ID" value="OsMH63_03G012720_01"/>
    <property type="gene ID" value="OsMH63_03G012720"/>
</dbReference>
<dbReference type="Gramene" id="OsPr106_03g0012700.01">
    <property type="protein sequence ID" value="OsPr106_03g0012700.01"/>
    <property type="gene ID" value="OsPr106_03g0012700"/>
</dbReference>
<dbReference type="Gramene" id="OsZS97_03G012690_01">
    <property type="protein sequence ID" value="OsZS97_03G012690_01"/>
    <property type="gene ID" value="OsZS97_03G012690"/>
</dbReference>
<dbReference type="HOGENOM" id="CLU_075666_1_0_1"/>
<dbReference type="OMA" id="AQLCQTT"/>
<dbReference type="OrthoDB" id="1914959at2759"/>
<dbReference type="Proteomes" id="UP000007015">
    <property type="component" value="Chromosome 3"/>
</dbReference>
<dbReference type="GO" id="GO:0000786">
    <property type="term" value="C:nucleosome"/>
    <property type="evidence" value="ECO:0007669"/>
    <property type="project" value="UniProtKB-KW"/>
</dbReference>
<dbReference type="GO" id="GO:0005634">
    <property type="term" value="C:nucleus"/>
    <property type="evidence" value="ECO:0007669"/>
    <property type="project" value="UniProtKB-SubCell"/>
</dbReference>
<dbReference type="GO" id="GO:0003677">
    <property type="term" value="F:DNA binding"/>
    <property type="evidence" value="ECO:0007669"/>
    <property type="project" value="UniProtKB-KW"/>
</dbReference>
<dbReference type="GO" id="GO:0046982">
    <property type="term" value="F:protein heterodimerization activity"/>
    <property type="evidence" value="ECO:0007669"/>
    <property type="project" value="InterPro"/>
</dbReference>
<dbReference type="GO" id="GO:0030527">
    <property type="term" value="F:structural constituent of chromatin"/>
    <property type="evidence" value="ECO:0007669"/>
    <property type="project" value="InterPro"/>
</dbReference>
<dbReference type="CDD" id="cd22910">
    <property type="entry name" value="HFD_H2B"/>
    <property type="match status" value="1"/>
</dbReference>
<dbReference type="FunFam" id="1.10.20.10:FF:000014">
    <property type="entry name" value="Histone H2B"/>
    <property type="match status" value="1"/>
</dbReference>
<dbReference type="Gene3D" id="1.10.20.10">
    <property type="entry name" value="Histone, subunit A"/>
    <property type="match status" value="1"/>
</dbReference>
<dbReference type="InterPro" id="IPR009072">
    <property type="entry name" value="Histone-fold"/>
</dbReference>
<dbReference type="InterPro" id="IPR007125">
    <property type="entry name" value="Histone_H2A/H2B/H3"/>
</dbReference>
<dbReference type="InterPro" id="IPR000558">
    <property type="entry name" value="Histone_H2B"/>
</dbReference>
<dbReference type="InterPro" id="IPR055333">
    <property type="entry name" value="HISTONE_H2B_site"/>
</dbReference>
<dbReference type="PANTHER" id="PTHR23428">
    <property type="entry name" value="HISTONE H2B"/>
    <property type="match status" value="1"/>
</dbReference>
<dbReference type="Pfam" id="PF00125">
    <property type="entry name" value="Histone"/>
    <property type="match status" value="1"/>
</dbReference>
<dbReference type="PRINTS" id="PR00621">
    <property type="entry name" value="HISTONEH2B"/>
</dbReference>
<dbReference type="SMART" id="SM00427">
    <property type="entry name" value="H2B"/>
    <property type="match status" value="1"/>
</dbReference>
<dbReference type="SUPFAM" id="SSF47113">
    <property type="entry name" value="Histone-fold"/>
    <property type="match status" value="1"/>
</dbReference>
<dbReference type="PROSITE" id="PS00357">
    <property type="entry name" value="HISTONE_H2B"/>
    <property type="match status" value="1"/>
</dbReference>
<evidence type="ECO:0000250" key="1"/>
<evidence type="ECO:0000256" key="2">
    <source>
        <dbReference type="SAM" id="MobiDB-lite"/>
    </source>
</evidence>
<evidence type="ECO:0000305" key="3"/>
<gene>
    <name type="ORF">OsI_010709</name>
</gene>
<organism>
    <name type="scientific">Oryza sativa subsp. indica</name>
    <name type="common">Rice</name>
    <dbReference type="NCBI Taxonomy" id="39946"/>
    <lineage>
        <taxon>Eukaryota</taxon>
        <taxon>Viridiplantae</taxon>
        <taxon>Streptophyta</taxon>
        <taxon>Embryophyta</taxon>
        <taxon>Tracheophyta</taxon>
        <taxon>Spermatophyta</taxon>
        <taxon>Magnoliopsida</taxon>
        <taxon>Liliopsida</taxon>
        <taxon>Poales</taxon>
        <taxon>Poaceae</taxon>
        <taxon>BOP clade</taxon>
        <taxon>Oryzoideae</taxon>
        <taxon>Oryzeae</taxon>
        <taxon>Oryzinae</taxon>
        <taxon>Oryza</taxon>
        <taxon>Oryza sativa</taxon>
    </lineage>
</organism>
<accession>A2XF66</accession>
<feature type="initiator methionine" description="Removed" evidence="1">
    <location>
        <position position="1"/>
    </location>
</feature>
<feature type="chain" id="PRO_0000294176" description="Histone H2B.1">
    <location>
        <begin position="2"/>
        <end position="152"/>
    </location>
</feature>
<feature type="region of interest" description="Disordered" evidence="2">
    <location>
        <begin position="1"/>
        <end position="60"/>
    </location>
</feature>
<feature type="compositionally biased region" description="Basic and acidic residues" evidence="2">
    <location>
        <begin position="1"/>
        <end position="23"/>
    </location>
</feature>
<feature type="modified residue" description="N6-acetyllysine" evidence="1">
    <location>
        <position position="7"/>
    </location>
</feature>
<feature type="modified residue" description="N6-acetyllysine" evidence="1">
    <location>
        <position position="35"/>
    </location>
</feature>
<feature type="cross-link" description="Glycyl lysine isopeptide (Lys-Gly) (interchain with G-Cter in ubiquitin)" evidence="1">
    <location>
        <position position="148"/>
    </location>
</feature>
<keyword id="KW-0007">Acetylation</keyword>
<keyword id="KW-0158">Chromosome</keyword>
<keyword id="KW-0238">DNA-binding</keyword>
<keyword id="KW-1017">Isopeptide bond</keyword>
<keyword id="KW-0544">Nucleosome core</keyword>
<keyword id="KW-0539">Nucleus</keyword>
<keyword id="KW-1185">Reference proteome</keyword>
<keyword id="KW-0832">Ubl conjugation</keyword>